<protein>
    <recommendedName>
        <fullName evidence="1">DNA mismatch repair protein MutS</fullName>
    </recommendedName>
</protein>
<reference key="1">
    <citation type="journal article" date="2011" name="Proc. Natl. Acad. Sci. U.S.A.">
        <title>Genomic anatomy of Escherichia coli O157:H7 outbreaks.</title>
        <authorList>
            <person name="Eppinger M."/>
            <person name="Mammel M.K."/>
            <person name="Leclerc J.E."/>
            <person name="Ravel J."/>
            <person name="Cebula T.A."/>
        </authorList>
    </citation>
    <scope>NUCLEOTIDE SEQUENCE [LARGE SCALE GENOMIC DNA]</scope>
    <source>
        <strain>EC4115 / EHEC</strain>
    </source>
</reference>
<dbReference type="EMBL" id="CP001164">
    <property type="protein sequence ID" value="ACI38015.1"/>
    <property type="molecule type" value="Genomic_DNA"/>
</dbReference>
<dbReference type="RefSeq" id="WP_001272898.1">
    <property type="nucleotide sequence ID" value="NC_011353.1"/>
</dbReference>
<dbReference type="SMR" id="B5Z397"/>
<dbReference type="KEGG" id="ecf:ECH74115_3986"/>
<dbReference type="HOGENOM" id="CLU_002472_4_0_6"/>
<dbReference type="GO" id="GO:0005829">
    <property type="term" value="C:cytosol"/>
    <property type="evidence" value="ECO:0007669"/>
    <property type="project" value="TreeGrafter"/>
</dbReference>
<dbReference type="GO" id="GO:0005524">
    <property type="term" value="F:ATP binding"/>
    <property type="evidence" value="ECO:0007669"/>
    <property type="project" value="UniProtKB-UniRule"/>
</dbReference>
<dbReference type="GO" id="GO:0140664">
    <property type="term" value="F:ATP-dependent DNA damage sensor activity"/>
    <property type="evidence" value="ECO:0007669"/>
    <property type="project" value="InterPro"/>
</dbReference>
<dbReference type="GO" id="GO:0003684">
    <property type="term" value="F:damaged DNA binding"/>
    <property type="evidence" value="ECO:0007669"/>
    <property type="project" value="UniProtKB-UniRule"/>
</dbReference>
<dbReference type="GO" id="GO:0030983">
    <property type="term" value="F:mismatched DNA binding"/>
    <property type="evidence" value="ECO:0007669"/>
    <property type="project" value="InterPro"/>
</dbReference>
<dbReference type="GO" id="GO:0006298">
    <property type="term" value="P:mismatch repair"/>
    <property type="evidence" value="ECO:0007669"/>
    <property type="project" value="UniProtKB-UniRule"/>
</dbReference>
<dbReference type="CDD" id="cd03284">
    <property type="entry name" value="ABC_MutS1"/>
    <property type="match status" value="1"/>
</dbReference>
<dbReference type="FunFam" id="1.10.1420.10:FF:000002">
    <property type="entry name" value="DNA mismatch repair protein MutS"/>
    <property type="match status" value="1"/>
</dbReference>
<dbReference type="FunFam" id="3.30.420.110:FF:000001">
    <property type="entry name" value="DNA mismatch repair protein MutS"/>
    <property type="match status" value="1"/>
</dbReference>
<dbReference type="FunFam" id="3.40.1170.10:FF:000001">
    <property type="entry name" value="DNA mismatch repair protein MutS"/>
    <property type="match status" value="1"/>
</dbReference>
<dbReference type="FunFam" id="3.40.50.300:FF:000283">
    <property type="entry name" value="DNA mismatch repair protein MutS"/>
    <property type="match status" value="1"/>
</dbReference>
<dbReference type="Gene3D" id="1.10.1420.10">
    <property type="match status" value="2"/>
</dbReference>
<dbReference type="Gene3D" id="6.10.140.430">
    <property type="match status" value="1"/>
</dbReference>
<dbReference type="Gene3D" id="3.40.1170.10">
    <property type="entry name" value="DNA repair protein MutS, domain I"/>
    <property type="match status" value="1"/>
</dbReference>
<dbReference type="Gene3D" id="3.30.420.110">
    <property type="entry name" value="MutS, connector domain"/>
    <property type="match status" value="1"/>
</dbReference>
<dbReference type="Gene3D" id="3.40.50.300">
    <property type="entry name" value="P-loop containing nucleotide triphosphate hydrolases"/>
    <property type="match status" value="1"/>
</dbReference>
<dbReference type="HAMAP" id="MF_00096">
    <property type="entry name" value="MutS"/>
    <property type="match status" value="1"/>
</dbReference>
<dbReference type="InterPro" id="IPR005748">
    <property type="entry name" value="DNA_mismatch_repair_MutS"/>
</dbReference>
<dbReference type="InterPro" id="IPR007695">
    <property type="entry name" value="DNA_mismatch_repair_MutS-lik_N"/>
</dbReference>
<dbReference type="InterPro" id="IPR017261">
    <property type="entry name" value="DNA_mismatch_repair_MutS/MSH"/>
</dbReference>
<dbReference type="InterPro" id="IPR000432">
    <property type="entry name" value="DNA_mismatch_repair_MutS_C"/>
</dbReference>
<dbReference type="InterPro" id="IPR007861">
    <property type="entry name" value="DNA_mismatch_repair_MutS_clamp"/>
</dbReference>
<dbReference type="InterPro" id="IPR007696">
    <property type="entry name" value="DNA_mismatch_repair_MutS_core"/>
</dbReference>
<dbReference type="InterPro" id="IPR016151">
    <property type="entry name" value="DNA_mismatch_repair_MutS_N"/>
</dbReference>
<dbReference type="InterPro" id="IPR036187">
    <property type="entry name" value="DNA_mismatch_repair_MutS_sf"/>
</dbReference>
<dbReference type="InterPro" id="IPR007860">
    <property type="entry name" value="DNA_mmatch_repair_MutS_con_dom"/>
</dbReference>
<dbReference type="InterPro" id="IPR045076">
    <property type="entry name" value="MutS"/>
</dbReference>
<dbReference type="InterPro" id="IPR036678">
    <property type="entry name" value="MutS_con_dom_sf"/>
</dbReference>
<dbReference type="InterPro" id="IPR027417">
    <property type="entry name" value="P-loop_NTPase"/>
</dbReference>
<dbReference type="NCBIfam" id="TIGR01070">
    <property type="entry name" value="mutS1"/>
    <property type="match status" value="1"/>
</dbReference>
<dbReference type="NCBIfam" id="NF003810">
    <property type="entry name" value="PRK05399.1"/>
    <property type="match status" value="1"/>
</dbReference>
<dbReference type="PANTHER" id="PTHR11361:SF34">
    <property type="entry name" value="DNA MISMATCH REPAIR PROTEIN MSH1, MITOCHONDRIAL"/>
    <property type="match status" value="1"/>
</dbReference>
<dbReference type="PANTHER" id="PTHR11361">
    <property type="entry name" value="DNA MISMATCH REPAIR PROTEIN MUTS FAMILY MEMBER"/>
    <property type="match status" value="1"/>
</dbReference>
<dbReference type="Pfam" id="PF01624">
    <property type="entry name" value="MutS_I"/>
    <property type="match status" value="1"/>
</dbReference>
<dbReference type="Pfam" id="PF05188">
    <property type="entry name" value="MutS_II"/>
    <property type="match status" value="1"/>
</dbReference>
<dbReference type="Pfam" id="PF05192">
    <property type="entry name" value="MutS_III"/>
    <property type="match status" value="1"/>
</dbReference>
<dbReference type="Pfam" id="PF05190">
    <property type="entry name" value="MutS_IV"/>
    <property type="match status" value="1"/>
</dbReference>
<dbReference type="Pfam" id="PF00488">
    <property type="entry name" value="MutS_V"/>
    <property type="match status" value="1"/>
</dbReference>
<dbReference type="PIRSF" id="PIRSF037677">
    <property type="entry name" value="DNA_mis_repair_Msh6"/>
    <property type="match status" value="1"/>
</dbReference>
<dbReference type="SMART" id="SM00534">
    <property type="entry name" value="MUTSac"/>
    <property type="match status" value="1"/>
</dbReference>
<dbReference type="SMART" id="SM00533">
    <property type="entry name" value="MUTSd"/>
    <property type="match status" value="1"/>
</dbReference>
<dbReference type="SUPFAM" id="SSF55271">
    <property type="entry name" value="DNA repair protein MutS, domain I"/>
    <property type="match status" value="1"/>
</dbReference>
<dbReference type="SUPFAM" id="SSF53150">
    <property type="entry name" value="DNA repair protein MutS, domain II"/>
    <property type="match status" value="1"/>
</dbReference>
<dbReference type="SUPFAM" id="SSF48334">
    <property type="entry name" value="DNA repair protein MutS, domain III"/>
    <property type="match status" value="1"/>
</dbReference>
<dbReference type="SUPFAM" id="SSF52540">
    <property type="entry name" value="P-loop containing nucleoside triphosphate hydrolases"/>
    <property type="match status" value="1"/>
</dbReference>
<dbReference type="PROSITE" id="PS00486">
    <property type="entry name" value="DNA_MISMATCH_REPAIR_2"/>
    <property type="match status" value="1"/>
</dbReference>
<keyword id="KW-0067">ATP-binding</keyword>
<keyword id="KW-0227">DNA damage</keyword>
<keyword id="KW-0234">DNA repair</keyword>
<keyword id="KW-0238">DNA-binding</keyword>
<keyword id="KW-0547">Nucleotide-binding</keyword>
<accession>B5Z397</accession>
<proteinExistence type="inferred from homology"/>
<gene>
    <name evidence="1" type="primary">mutS</name>
    <name type="ordered locus">ECH74115_3986</name>
</gene>
<evidence type="ECO:0000255" key="1">
    <source>
        <dbReference type="HAMAP-Rule" id="MF_00096"/>
    </source>
</evidence>
<feature type="chain" id="PRO_1000093622" description="DNA mismatch repair protein MutS">
    <location>
        <begin position="1"/>
        <end position="853"/>
    </location>
</feature>
<feature type="binding site" evidence="1">
    <location>
        <begin position="614"/>
        <end position="621"/>
    </location>
    <ligand>
        <name>ATP</name>
        <dbReference type="ChEBI" id="CHEBI:30616"/>
    </ligand>
</feature>
<sequence length="853" mass="95291">MSAIENFDAHTPMMQQYLKLKAQHPEILLFYRMGDFYELFYDDAKRASQLLDISLTKRGASAGEPIPMAGIPYHAVENYLAKLVNQGESVAICEQIGDPATSKGPVERKVVRIVTPGTISDEALLQERQDNLLAAIWQDSKGFGYATLDISSGRFRLSEPADRETMAAELQRTNPAELLYAEDFAEMSLIEGRRGLRRRPLWEFEIDTARQQLNLQFGTRDLVGFGVENAPRGLCAAGCLLQYAKDTQRTTLPHIRSITMEREQDSIIMDAATRRNLEITQNLAGGAENTLASVLDCTVTPMGSRMLKRWLHMPVRDTRVLLERQQTIGALQDFTAELQPVLRQVGDLERILARLALRTARPRDLARMRHAFQQLPELRAQLETVDSAPVQALREKMGEFAELRDLLERAIIDTPPVLVRDGGVIASGYNEELDEWRALADGATDYLERLEVRERERTGLDTLKVGFNAVHGYYIQISRGQSHLAPINYMRRQTLKNAERYIIPELKEYEDKVLTSKGKALALEKQLYEELFDLLLPHLEALQQSASALAELDVLVNLAERAYTLNYTCPTFIDKPGIRITEGRHPVVEQVLNEPFIANPLNLSPQRRMLIITGPNMGGKSTYMRQTALIALMAYIGSYVPAQKVEIGPIDRIFTRVGAADDLASGRSTFMVEMTETANILHNATEYSLVLMDEIGRGTSTYDGLSLAWACAENLANKIKALTLFATHYFELTQLPEKMEGVANVHLDALEHGDTIAFMHSVQDGAASKSYGLAVAALAGVPKEVIKRARQKLRELESISPNAAATQVDGTQMSLLSVPEETSPAVEALENLDPDSLTPRQALEWIYRLKSLV</sequence>
<organism>
    <name type="scientific">Escherichia coli O157:H7 (strain EC4115 / EHEC)</name>
    <dbReference type="NCBI Taxonomy" id="444450"/>
    <lineage>
        <taxon>Bacteria</taxon>
        <taxon>Pseudomonadati</taxon>
        <taxon>Pseudomonadota</taxon>
        <taxon>Gammaproteobacteria</taxon>
        <taxon>Enterobacterales</taxon>
        <taxon>Enterobacteriaceae</taxon>
        <taxon>Escherichia</taxon>
    </lineage>
</organism>
<comment type="function">
    <text evidence="1">This protein is involved in the repair of mismatches in DNA. It is possible that it carries out the mismatch recognition step. This protein has a weak ATPase activity.</text>
</comment>
<comment type="similarity">
    <text evidence="1">Belongs to the DNA mismatch repair MutS family.</text>
</comment>
<name>MUTS_ECO5E</name>